<accession>P86896</accession>
<feature type="peptide" id="PRO_0000407551" description="Putative antimicrobial peptide 2">
    <location>
        <begin position="1"/>
        <end position="19" status="greater than"/>
    </location>
</feature>
<feature type="non-terminal residue" evidence="2">
    <location>
        <position position="19"/>
    </location>
</feature>
<protein>
    <recommendedName>
        <fullName>Putative antimicrobial peptide 2</fullName>
        <shortName evidence="2">Ls-AMP2</shortName>
    </recommendedName>
</protein>
<organism>
    <name type="scientific">Lippia sidoides</name>
    <name type="common">Pepper-rosmarin</name>
    <dbReference type="NCBI Taxonomy" id="542673"/>
    <lineage>
        <taxon>Eukaryota</taxon>
        <taxon>Viridiplantae</taxon>
        <taxon>Streptophyta</taxon>
        <taxon>Embryophyta</taxon>
        <taxon>Tracheophyta</taxon>
        <taxon>Spermatophyta</taxon>
        <taxon>Magnoliopsida</taxon>
        <taxon>eudicotyledons</taxon>
        <taxon>Gunneridae</taxon>
        <taxon>Pentapetalae</taxon>
        <taxon>asterids</taxon>
        <taxon>lamiids</taxon>
        <taxon>Lamiales</taxon>
        <taxon>Verbenaceae</taxon>
        <taxon>Lantaneae</taxon>
        <taxon>Lippia</taxon>
    </lineage>
</organism>
<proteinExistence type="evidence at protein level"/>
<sequence>SPPEAAYGPGNTNSDSGDK</sequence>
<dbReference type="GO" id="GO:0050832">
    <property type="term" value="P:defense response to fungus"/>
    <property type="evidence" value="ECO:0007669"/>
    <property type="project" value="UniProtKB-KW"/>
</dbReference>
<dbReference type="GO" id="GO:0031640">
    <property type="term" value="P:killing of cells of another organism"/>
    <property type="evidence" value="ECO:0007669"/>
    <property type="project" value="UniProtKB-KW"/>
</dbReference>
<keyword id="KW-0929">Antimicrobial</keyword>
<keyword id="KW-0903">Direct protein sequencing</keyword>
<keyword id="KW-0295">Fungicide</keyword>
<keyword id="KW-0611">Plant defense</keyword>
<reference evidence="3" key="1">
    <citation type="journal article" date="2011" name="Protein J.">
        <title>Identification of botryticidal proteins with similarity to NBS LRR proteins in rosemary pepper Lippia sidoides cham flowers.</title>
        <authorList>
            <person name="Moreira J.S."/>
            <person name="Almeida R.G."/>
            <person name="Tavares L.S."/>
            <person name="Santos M.O."/>
            <person name="Viccini L.F."/>
            <person name="Vasconcelos I.M."/>
            <person name="Oliveira J.A.T."/>
            <person name="Raposo N.R.B."/>
            <person name="Dias S.C."/>
            <person name="Franco O.L."/>
        </authorList>
    </citation>
    <scope>PROTEIN SEQUENCE</scope>
    <scope>FUNCTION</scope>
    <source>
        <tissue evidence="1">Flower</tissue>
    </source>
</reference>
<evidence type="ECO:0000269" key="1">
    <source>
    </source>
</evidence>
<evidence type="ECO:0000303" key="2">
    <source>
    </source>
</evidence>
<evidence type="ECO:0000305" key="3"/>
<name>AMP2_LIPSI</name>
<comment type="function">
    <text evidence="3">May possess antifungal activity against B.cinerea.</text>
</comment>
<comment type="caution">
    <text evidence="3">Antifungal activity was tested using a fraction containing a number of different peptides. It is not clear which peptide actually has antifungal activity.</text>
</comment>